<keyword id="KW-0217">Developmental protein</keyword>
<keyword id="KW-0238">DNA-binding</keyword>
<keyword id="KW-0371">Homeobox</keyword>
<keyword id="KW-0539">Nucleus</keyword>
<keyword id="KW-1185">Reference proteome</keyword>
<keyword id="KW-0804">Transcription</keyword>
<keyword id="KW-0805">Transcription regulation</keyword>
<evidence type="ECO:0000255" key="1">
    <source>
        <dbReference type="PROSITE-ProRule" id="PRU00108"/>
    </source>
</evidence>
<evidence type="ECO:0000305" key="2"/>
<name>HXD9_CHICK</name>
<dbReference type="PIR" id="S14797">
    <property type="entry name" value="S14797"/>
</dbReference>
<dbReference type="SMR" id="P24340"/>
<dbReference type="FunCoup" id="P24340">
    <property type="interactions" value="124"/>
</dbReference>
<dbReference type="STRING" id="9031.ENSGALP00000029264"/>
<dbReference type="PaxDb" id="9031-ENSGALP00000029264"/>
<dbReference type="VEuPathDB" id="HostDB:geneid_396096"/>
<dbReference type="eggNOG" id="KOG0487">
    <property type="taxonomic scope" value="Eukaryota"/>
</dbReference>
<dbReference type="InParanoid" id="P24340"/>
<dbReference type="OrthoDB" id="6159439at2759"/>
<dbReference type="PhylomeDB" id="P24340"/>
<dbReference type="Proteomes" id="UP000000539">
    <property type="component" value="Unassembled WGS sequence"/>
</dbReference>
<dbReference type="GO" id="GO:0005634">
    <property type="term" value="C:nucleus"/>
    <property type="evidence" value="ECO:0007669"/>
    <property type="project" value="UniProtKB-SubCell"/>
</dbReference>
<dbReference type="GO" id="GO:0003677">
    <property type="term" value="F:DNA binding"/>
    <property type="evidence" value="ECO:0007669"/>
    <property type="project" value="UniProtKB-KW"/>
</dbReference>
<dbReference type="GO" id="GO:0000981">
    <property type="term" value="F:DNA-binding transcription factor activity, RNA polymerase II-specific"/>
    <property type="evidence" value="ECO:0007669"/>
    <property type="project" value="InterPro"/>
</dbReference>
<dbReference type="CDD" id="cd00086">
    <property type="entry name" value="homeodomain"/>
    <property type="match status" value="1"/>
</dbReference>
<dbReference type="Gene3D" id="1.10.10.60">
    <property type="entry name" value="Homeodomain-like"/>
    <property type="match status" value="1"/>
</dbReference>
<dbReference type="InterPro" id="IPR001356">
    <property type="entry name" value="HD"/>
</dbReference>
<dbReference type="InterPro" id="IPR020479">
    <property type="entry name" value="HD_metazoa"/>
</dbReference>
<dbReference type="InterPro" id="IPR017970">
    <property type="entry name" value="Homeobox_CS"/>
</dbReference>
<dbReference type="InterPro" id="IPR009057">
    <property type="entry name" value="Homeodomain-like_sf"/>
</dbReference>
<dbReference type="InterPro" id="IPR046333">
    <property type="entry name" value="HXA10/ABDB-like"/>
</dbReference>
<dbReference type="PANTHER" id="PTHR45874:SF7">
    <property type="entry name" value="HOMEOBOX PROTEIN"/>
    <property type="match status" value="1"/>
</dbReference>
<dbReference type="PANTHER" id="PTHR45874">
    <property type="entry name" value="HOMEOBOX PROTEIN ABDOMINAL-B"/>
    <property type="match status" value="1"/>
</dbReference>
<dbReference type="Pfam" id="PF00046">
    <property type="entry name" value="Homeodomain"/>
    <property type="match status" value="1"/>
</dbReference>
<dbReference type="PRINTS" id="PR00024">
    <property type="entry name" value="HOMEOBOX"/>
</dbReference>
<dbReference type="SMART" id="SM00389">
    <property type="entry name" value="HOX"/>
    <property type="match status" value="1"/>
</dbReference>
<dbReference type="SUPFAM" id="SSF46689">
    <property type="entry name" value="Homeodomain-like"/>
    <property type="match status" value="1"/>
</dbReference>
<dbReference type="PROSITE" id="PS00027">
    <property type="entry name" value="HOMEOBOX_1"/>
    <property type="match status" value="1"/>
</dbReference>
<dbReference type="PROSITE" id="PS50071">
    <property type="entry name" value="HOMEOBOX_2"/>
    <property type="match status" value="1"/>
</dbReference>
<protein>
    <recommendedName>
        <fullName>Homeobox protein Hox-D9</fullName>
    </recommendedName>
    <alternativeName>
        <fullName>Homeobox protein Hox-4.4</fullName>
        <shortName>Chox-4.4</shortName>
    </alternativeName>
</protein>
<reference key="1">
    <citation type="journal article" date="1991" name="Nature">
        <title>Expression of the homeobox Hox-4 genes and the specification of position in chick wing development.</title>
        <authorList>
            <person name="Izpisua-Belmonte J.-C."/>
            <person name="Tickle C."/>
            <person name="Dolle P."/>
            <person name="Wolpert L."/>
            <person name="Duboule D."/>
        </authorList>
    </citation>
    <scope>NUCLEOTIDE SEQUENCE</scope>
</reference>
<gene>
    <name type="primary">HOXD9</name>
    <name type="synonym">CHOX-4.4</name>
</gene>
<proteinExistence type="evidence at transcript level"/>
<comment type="function">
    <text>Sequence-specific transcription factor which is part of a developmental regulatory system that provides cells with specific positional identities on the anterior-posterior axis.</text>
</comment>
<comment type="subcellular location">
    <subcellularLocation>
        <location>Nucleus</location>
    </subcellularLocation>
</comment>
<comment type="developmental stage">
    <text>HOXD genes are coordinately expressed in partially overlapping domains during wing development.</text>
</comment>
<comment type="similarity">
    <text evidence="2">Belongs to the Abd-B homeobox family.</text>
</comment>
<feature type="chain" id="PRO_0000200222" description="Homeobox protein Hox-D9">
    <location>
        <begin position="1" status="less than"/>
        <end position="60" status="greater than"/>
    </location>
</feature>
<feature type="DNA-binding region" description="Homeobox" evidence="1">
    <location>
        <begin position="1"/>
        <end position="60"/>
    </location>
</feature>
<feature type="non-terminal residue">
    <location>
        <position position="1"/>
    </location>
</feature>
<feature type="non-terminal residue">
    <location>
        <position position="60"/>
    </location>
</feature>
<organism>
    <name type="scientific">Gallus gallus</name>
    <name type="common">Chicken</name>
    <dbReference type="NCBI Taxonomy" id="9031"/>
    <lineage>
        <taxon>Eukaryota</taxon>
        <taxon>Metazoa</taxon>
        <taxon>Chordata</taxon>
        <taxon>Craniata</taxon>
        <taxon>Vertebrata</taxon>
        <taxon>Euteleostomi</taxon>
        <taxon>Archelosauria</taxon>
        <taxon>Archosauria</taxon>
        <taxon>Dinosauria</taxon>
        <taxon>Saurischia</taxon>
        <taxon>Theropoda</taxon>
        <taxon>Coelurosauria</taxon>
        <taxon>Aves</taxon>
        <taxon>Neognathae</taxon>
        <taxon>Galloanserae</taxon>
        <taxon>Galliformes</taxon>
        <taxon>Phasianidae</taxon>
        <taxon>Phasianinae</taxon>
        <taxon>Gallus</taxon>
    </lineage>
</organism>
<accession>P24340</accession>
<sequence>TRKKRCPYTKYQTLELEKEFLFNMYLTRDRRYEVARILNLTERQVKIWFQNRRMKMKKMS</sequence>